<name>LUXS_BACCQ</name>
<reference key="1">
    <citation type="journal article" date="2009" name="J. Bacteriol.">
        <title>Complete genome sequence of the extremophilic Bacillus cereus strain Q1 with industrial applications.</title>
        <authorList>
            <person name="Xiong Z."/>
            <person name="Jiang Y."/>
            <person name="Qi D."/>
            <person name="Lu H."/>
            <person name="Yang F."/>
            <person name="Yang J."/>
            <person name="Chen L."/>
            <person name="Sun L."/>
            <person name="Xu X."/>
            <person name="Xue Y."/>
            <person name="Zhu Y."/>
            <person name="Jin Q."/>
        </authorList>
    </citation>
    <scope>NUCLEOTIDE SEQUENCE [LARGE SCALE GENOMIC DNA]</scope>
    <source>
        <strain>Q1</strain>
    </source>
</reference>
<protein>
    <recommendedName>
        <fullName evidence="1">S-ribosylhomocysteine lyase</fullName>
        <ecNumber evidence="1">4.4.1.21</ecNumber>
    </recommendedName>
    <alternativeName>
        <fullName evidence="1">AI-2 synthesis protein</fullName>
    </alternativeName>
    <alternativeName>
        <fullName evidence="1">Autoinducer-2 production protein LuxS</fullName>
    </alternativeName>
</protein>
<sequence>MPSVESFELDHTIVKAPYVRHCGVHNVGSDGIVNKFDIRFCQPNKQAMKPDVIHTLEHLLAFNLRKYIDRYPHFDIIDISPMGCQTGYYLVVSGTPTVREIIDLLELTLKDAVQITEIPAANETQCGQAKLHDLEGAKRLMNFWLSQDKDELEKVFG</sequence>
<evidence type="ECO:0000255" key="1">
    <source>
        <dbReference type="HAMAP-Rule" id="MF_00091"/>
    </source>
</evidence>
<accession>B9J289</accession>
<dbReference type="EC" id="4.4.1.21" evidence="1"/>
<dbReference type="EMBL" id="CP000227">
    <property type="protein sequence ID" value="ACM15032.1"/>
    <property type="molecule type" value="Genomic_DNA"/>
</dbReference>
<dbReference type="SMR" id="B9J289"/>
<dbReference type="KEGG" id="bcq:BCQ_4606"/>
<dbReference type="HOGENOM" id="CLU_107531_2_0_9"/>
<dbReference type="Proteomes" id="UP000000441">
    <property type="component" value="Chromosome"/>
</dbReference>
<dbReference type="GO" id="GO:0005506">
    <property type="term" value="F:iron ion binding"/>
    <property type="evidence" value="ECO:0007669"/>
    <property type="project" value="InterPro"/>
</dbReference>
<dbReference type="GO" id="GO:0043768">
    <property type="term" value="F:S-ribosylhomocysteine lyase activity"/>
    <property type="evidence" value="ECO:0007669"/>
    <property type="project" value="UniProtKB-UniRule"/>
</dbReference>
<dbReference type="GO" id="GO:0009372">
    <property type="term" value="P:quorum sensing"/>
    <property type="evidence" value="ECO:0007669"/>
    <property type="project" value="UniProtKB-UniRule"/>
</dbReference>
<dbReference type="Gene3D" id="3.30.1360.80">
    <property type="entry name" value="S-ribosylhomocysteinase (LuxS)"/>
    <property type="match status" value="1"/>
</dbReference>
<dbReference type="HAMAP" id="MF_00091">
    <property type="entry name" value="LuxS"/>
    <property type="match status" value="1"/>
</dbReference>
<dbReference type="InterPro" id="IPR037005">
    <property type="entry name" value="LuxS_sf"/>
</dbReference>
<dbReference type="InterPro" id="IPR011249">
    <property type="entry name" value="Metalloenz_LuxS/M16"/>
</dbReference>
<dbReference type="InterPro" id="IPR003815">
    <property type="entry name" value="S-ribosylhomocysteinase"/>
</dbReference>
<dbReference type="NCBIfam" id="NF002603">
    <property type="entry name" value="PRK02260.1-3"/>
    <property type="match status" value="1"/>
</dbReference>
<dbReference type="PANTHER" id="PTHR35799">
    <property type="entry name" value="S-RIBOSYLHOMOCYSTEINE LYASE"/>
    <property type="match status" value="1"/>
</dbReference>
<dbReference type="PANTHER" id="PTHR35799:SF1">
    <property type="entry name" value="S-RIBOSYLHOMOCYSTEINE LYASE"/>
    <property type="match status" value="1"/>
</dbReference>
<dbReference type="Pfam" id="PF02664">
    <property type="entry name" value="LuxS"/>
    <property type="match status" value="1"/>
</dbReference>
<dbReference type="PIRSF" id="PIRSF006160">
    <property type="entry name" value="AI2"/>
    <property type="match status" value="1"/>
</dbReference>
<dbReference type="PRINTS" id="PR01487">
    <property type="entry name" value="LUXSPROTEIN"/>
</dbReference>
<dbReference type="SUPFAM" id="SSF63411">
    <property type="entry name" value="LuxS/MPP-like metallohydrolase"/>
    <property type="match status" value="1"/>
</dbReference>
<organism>
    <name type="scientific">Bacillus cereus (strain Q1)</name>
    <dbReference type="NCBI Taxonomy" id="361100"/>
    <lineage>
        <taxon>Bacteria</taxon>
        <taxon>Bacillati</taxon>
        <taxon>Bacillota</taxon>
        <taxon>Bacilli</taxon>
        <taxon>Bacillales</taxon>
        <taxon>Bacillaceae</taxon>
        <taxon>Bacillus</taxon>
        <taxon>Bacillus cereus group</taxon>
    </lineage>
</organism>
<gene>
    <name evidence="1" type="primary">luxS</name>
    <name type="ordered locus">BCQ_4606</name>
</gene>
<proteinExistence type="inferred from homology"/>
<feature type="chain" id="PRO_1000118534" description="S-ribosylhomocysteine lyase">
    <location>
        <begin position="1"/>
        <end position="157"/>
    </location>
</feature>
<feature type="binding site" evidence="1">
    <location>
        <position position="54"/>
    </location>
    <ligand>
        <name>Fe cation</name>
        <dbReference type="ChEBI" id="CHEBI:24875"/>
    </ligand>
</feature>
<feature type="binding site" evidence="1">
    <location>
        <position position="58"/>
    </location>
    <ligand>
        <name>Fe cation</name>
        <dbReference type="ChEBI" id="CHEBI:24875"/>
    </ligand>
</feature>
<feature type="binding site" evidence="1">
    <location>
        <position position="126"/>
    </location>
    <ligand>
        <name>Fe cation</name>
        <dbReference type="ChEBI" id="CHEBI:24875"/>
    </ligand>
</feature>
<keyword id="KW-0071">Autoinducer synthesis</keyword>
<keyword id="KW-0408">Iron</keyword>
<keyword id="KW-0456">Lyase</keyword>
<keyword id="KW-0479">Metal-binding</keyword>
<keyword id="KW-0673">Quorum sensing</keyword>
<comment type="function">
    <text evidence="1">Involved in the synthesis of autoinducer 2 (AI-2) which is secreted by bacteria and is used to communicate both the cell density and the metabolic potential of the environment. The regulation of gene expression in response to changes in cell density is called quorum sensing. Catalyzes the transformation of S-ribosylhomocysteine (RHC) to homocysteine (HC) and 4,5-dihydroxy-2,3-pentadione (DPD).</text>
</comment>
<comment type="catalytic activity">
    <reaction evidence="1">
        <text>S-(5-deoxy-D-ribos-5-yl)-L-homocysteine = (S)-4,5-dihydroxypentane-2,3-dione + L-homocysteine</text>
        <dbReference type="Rhea" id="RHEA:17753"/>
        <dbReference type="ChEBI" id="CHEBI:29484"/>
        <dbReference type="ChEBI" id="CHEBI:58195"/>
        <dbReference type="ChEBI" id="CHEBI:58199"/>
        <dbReference type="EC" id="4.4.1.21"/>
    </reaction>
</comment>
<comment type="cofactor">
    <cofactor evidence="1">
        <name>Fe cation</name>
        <dbReference type="ChEBI" id="CHEBI:24875"/>
    </cofactor>
    <text evidence="1">Binds 1 Fe cation per subunit.</text>
</comment>
<comment type="subunit">
    <text evidence="1">Homodimer.</text>
</comment>
<comment type="similarity">
    <text evidence="1">Belongs to the LuxS family.</text>
</comment>